<dbReference type="EC" id="3.5.1.108" evidence="1"/>
<dbReference type="EMBL" id="AM884177">
    <property type="protein sequence ID" value="CAP07187.1"/>
    <property type="molecule type" value="Genomic_DNA"/>
</dbReference>
<dbReference type="RefSeq" id="WP_009873879.1">
    <property type="nucleotide sequence ID" value="NC_010280.2"/>
</dbReference>
<dbReference type="SMR" id="B0B9Y6"/>
<dbReference type="KEGG" id="ctl:CTLon_0790"/>
<dbReference type="HOGENOM" id="CLU_046528_1_0_0"/>
<dbReference type="UniPathway" id="UPA00359">
    <property type="reaction ID" value="UER00478"/>
</dbReference>
<dbReference type="Proteomes" id="UP001154401">
    <property type="component" value="Chromosome"/>
</dbReference>
<dbReference type="GO" id="GO:0016020">
    <property type="term" value="C:membrane"/>
    <property type="evidence" value="ECO:0007669"/>
    <property type="project" value="GOC"/>
</dbReference>
<dbReference type="GO" id="GO:0046872">
    <property type="term" value="F:metal ion binding"/>
    <property type="evidence" value="ECO:0007669"/>
    <property type="project" value="UniProtKB-KW"/>
</dbReference>
<dbReference type="GO" id="GO:0103117">
    <property type="term" value="F:UDP-3-O-acyl-N-acetylglucosamine deacetylase activity"/>
    <property type="evidence" value="ECO:0007669"/>
    <property type="project" value="UniProtKB-UniRule"/>
</dbReference>
<dbReference type="GO" id="GO:0009245">
    <property type="term" value="P:lipid A biosynthetic process"/>
    <property type="evidence" value="ECO:0007669"/>
    <property type="project" value="UniProtKB-UniRule"/>
</dbReference>
<dbReference type="Gene3D" id="3.30.230.20">
    <property type="entry name" value="lpxc deacetylase, domain 1"/>
    <property type="match status" value="1"/>
</dbReference>
<dbReference type="Gene3D" id="3.30.1700.10">
    <property type="entry name" value="lpxc deacetylase, domain 2"/>
    <property type="match status" value="1"/>
</dbReference>
<dbReference type="HAMAP" id="MF_00388">
    <property type="entry name" value="LpxC"/>
    <property type="match status" value="1"/>
</dbReference>
<dbReference type="InterPro" id="IPR020568">
    <property type="entry name" value="Ribosomal_Su5_D2-typ_SF"/>
</dbReference>
<dbReference type="InterPro" id="IPR004463">
    <property type="entry name" value="UDP-acyl_GlcNac_deAcase"/>
</dbReference>
<dbReference type="InterPro" id="IPR011334">
    <property type="entry name" value="UDP-acyl_GlcNac_deAcase_C"/>
</dbReference>
<dbReference type="InterPro" id="IPR015870">
    <property type="entry name" value="UDP-acyl_N-AcGlcN_deAcase_N"/>
</dbReference>
<dbReference type="NCBIfam" id="TIGR00325">
    <property type="entry name" value="lpxC"/>
    <property type="match status" value="1"/>
</dbReference>
<dbReference type="PANTHER" id="PTHR33694">
    <property type="entry name" value="UDP-3-O-ACYL-N-ACETYLGLUCOSAMINE DEACETYLASE 1, MITOCHONDRIAL-RELATED"/>
    <property type="match status" value="1"/>
</dbReference>
<dbReference type="PANTHER" id="PTHR33694:SF1">
    <property type="entry name" value="UDP-3-O-ACYL-N-ACETYLGLUCOSAMINE DEACETYLASE 1, MITOCHONDRIAL-RELATED"/>
    <property type="match status" value="1"/>
</dbReference>
<dbReference type="Pfam" id="PF03331">
    <property type="entry name" value="LpxC"/>
    <property type="match status" value="1"/>
</dbReference>
<dbReference type="SUPFAM" id="SSF54211">
    <property type="entry name" value="Ribosomal protein S5 domain 2-like"/>
    <property type="match status" value="2"/>
</dbReference>
<comment type="function">
    <text evidence="1">Catalyzes the hydrolysis of UDP-3-O-myristoyl-N-acetylglucosamine to form UDP-3-O-myristoylglucosamine and acetate, the committed step in lipid A biosynthesis.</text>
</comment>
<comment type="catalytic activity">
    <reaction evidence="1">
        <text>a UDP-3-O-[(3R)-3-hydroxyacyl]-N-acetyl-alpha-D-glucosamine + H2O = a UDP-3-O-[(3R)-3-hydroxyacyl]-alpha-D-glucosamine + acetate</text>
        <dbReference type="Rhea" id="RHEA:67816"/>
        <dbReference type="ChEBI" id="CHEBI:15377"/>
        <dbReference type="ChEBI" id="CHEBI:30089"/>
        <dbReference type="ChEBI" id="CHEBI:137740"/>
        <dbReference type="ChEBI" id="CHEBI:173225"/>
        <dbReference type="EC" id="3.5.1.108"/>
    </reaction>
</comment>
<comment type="cofactor">
    <cofactor evidence="1">
        <name>Zn(2+)</name>
        <dbReference type="ChEBI" id="CHEBI:29105"/>
    </cofactor>
</comment>
<comment type="pathway">
    <text evidence="1">Glycolipid biosynthesis; lipid IV(A) biosynthesis; lipid IV(A) from (3R)-3-hydroxytetradecanoyl-[acyl-carrier-protein] and UDP-N-acetyl-alpha-D-glucosamine: step 2/6.</text>
</comment>
<comment type="similarity">
    <text evidence="1">Belongs to the LpxC family.</text>
</comment>
<sequence length="286" mass="31298">MLGRAQRTLKRKVCYSGVGVHFGKAAMLTLEPAEENTGVVFSRHAASEQYIPARLANVCGTGRSTTLSLDGSVISTVEHLLASLYSFGVDNVRIYCSEDEIPIGDGSAQVFMDLIDQAGIQEQEQTVQIARLAHPVYYQYQDTILAAFPSDEFKISYTLHYSHNSTIGTQYRSLVISEESFRKEIAPCRTFALYSELCFLMEKGLIGGGCVGNAVLFKDDGVISLGKLRFPDEPVRHKILDLIGDLSLVGTPFLAHVIAVGSGHSSNIALGNRILEALQHEQELVK</sequence>
<protein>
    <recommendedName>
        <fullName evidence="1">UDP-3-O-acyl-N-acetylglucosamine deacetylase</fullName>
        <shortName evidence="1">UDP-3-O-acyl-GlcNAc deacetylase</shortName>
        <ecNumber evidence="1">3.5.1.108</ecNumber>
    </recommendedName>
    <alternativeName>
        <fullName evidence="1">UDP-3-O-[R-3-hydroxymyristoyl]-N-acetylglucosamine deacetylase</fullName>
    </alternativeName>
</protein>
<proteinExistence type="inferred from homology"/>
<organism>
    <name type="scientific">Chlamydia trachomatis serovar L2b (strain UCH-1/proctitis)</name>
    <dbReference type="NCBI Taxonomy" id="471473"/>
    <lineage>
        <taxon>Bacteria</taxon>
        <taxon>Pseudomonadati</taxon>
        <taxon>Chlamydiota</taxon>
        <taxon>Chlamydiia</taxon>
        <taxon>Chlamydiales</taxon>
        <taxon>Chlamydiaceae</taxon>
        <taxon>Chlamydia/Chlamydophila group</taxon>
        <taxon>Chlamydia</taxon>
    </lineage>
</organism>
<name>LPXC_CHLTB</name>
<reference key="1">
    <citation type="journal article" date="2008" name="Genome Res.">
        <title>Chlamydia trachomatis: genome sequence analysis of lymphogranuloma venereum isolates.</title>
        <authorList>
            <person name="Thomson N.R."/>
            <person name="Holden M.T.G."/>
            <person name="Carder C."/>
            <person name="Lennard N."/>
            <person name="Lockey S.J."/>
            <person name="Marsh P."/>
            <person name="Skipp P."/>
            <person name="O'Connor C.D."/>
            <person name="Goodhead I."/>
            <person name="Norbertzcak H."/>
            <person name="Harris B."/>
            <person name="Ormond D."/>
            <person name="Rance R."/>
            <person name="Quail M.A."/>
            <person name="Parkhill J."/>
            <person name="Stephens R.S."/>
            <person name="Clarke I.N."/>
        </authorList>
    </citation>
    <scope>NUCLEOTIDE SEQUENCE [LARGE SCALE GENOMIC DNA]</scope>
    <source>
        <strain>UCH-1/proctitis</strain>
    </source>
</reference>
<keyword id="KW-0378">Hydrolase</keyword>
<keyword id="KW-0441">Lipid A biosynthesis</keyword>
<keyword id="KW-0444">Lipid biosynthesis</keyword>
<keyword id="KW-0443">Lipid metabolism</keyword>
<keyword id="KW-0479">Metal-binding</keyword>
<keyword id="KW-0862">Zinc</keyword>
<gene>
    <name evidence="1" type="primary">lpxC</name>
    <name type="ordered locus">CTLon_0790</name>
</gene>
<feature type="chain" id="PRO_1000122773" description="UDP-3-O-acyl-N-acetylglucosamine deacetylase">
    <location>
        <begin position="1"/>
        <end position="286"/>
    </location>
</feature>
<feature type="active site" description="Proton donor" evidence="1">
    <location>
        <position position="264"/>
    </location>
</feature>
<feature type="binding site" evidence="1">
    <location>
        <position position="79"/>
    </location>
    <ligand>
        <name>Zn(2+)</name>
        <dbReference type="ChEBI" id="CHEBI:29105"/>
    </ligand>
</feature>
<feature type="binding site" evidence="1">
    <location>
        <position position="237"/>
    </location>
    <ligand>
        <name>Zn(2+)</name>
        <dbReference type="ChEBI" id="CHEBI:29105"/>
    </ligand>
</feature>
<feature type="binding site" evidence="1">
    <location>
        <position position="241"/>
    </location>
    <ligand>
        <name>Zn(2+)</name>
        <dbReference type="ChEBI" id="CHEBI:29105"/>
    </ligand>
</feature>
<accession>B0B9Y6</accession>
<evidence type="ECO:0000255" key="1">
    <source>
        <dbReference type="HAMAP-Rule" id="MF_00388"/>
    </source>
</evidence>